<name>DADA_RHOP2</name>
<comment type="function">
    <text evidence="1">Oxidative deamination of D-amino acids.</text>
</comment>
<comment type="catalytic activity">
    <reaction evidence="1">
        <text>a D-alpha-amino acid + A + H2O = a 2-oxocarboxylate + AH2 + NH4(+)</text>
        <dbReference type="Rhea" id="RHEA:18125"/>
        <dbReference type="ChEBI" id="CHEBI:13193"/>
        <dbReference type="ChEBI" id="CHEBI:15377"/>
        <dbReference type="ChEBI" id="CHEBI:17499"/>
        <dbReference type="ChEBI" id="CHEBI:28938"/>
        <dbReference type="ChEBI" id="CHEBI:35179"/>
        <dbReference type="ChEBI" id="CHEBI:59871"/>
    </reaction>
</comment>
<comment type="cofactor">
    <cofactor evidence="1">
        <name>FAD</name>
        <dbReference type="ChEBI" id="CHEBI:57692"/>
    </cofactor>
</comment>
<comment type="pathway">
    <text>Amino-acid degradation; D-alanine degradation; NH(3) and pyruvate from D-alanine: step 1/1.</text>
</comment>
<comment type="similarity">
    <text evidence="1">Belongs to the DadA oxidoreductase family.</text>
</comment>
<dbReference type="EC" id="1.4.99.-" evidence="1"/>
<dbReference type="EMBL" id="CP000250">
    <property type="protein sequence ID" value="ABD06213.1"/>
    <property type="molecule type" value="Genomic_DNA"/>
</dbReference>
<dbReference type="RefSeq" id="WP_011440401.1">
    <property type="nucleotide sequence ID" value="NC_007778.1"/>
</dbReference>
<dbReference type="SMR" id="Q2IZZ7"/>
<dbReference type="STRING" id="316058.RPB_1503"/>
<dbReference type="KEGG" id="rpb:RPB_1503"/>
<dbReference type="eggNOG" id="COG0665">
    <property type="taxonomic scope" value="Bacteria"/>
</dbReference>
<dbReference type="HOGENOM" id="CLU_007884_9_2_5"/>
<dbReference type="OrthoDB" id="9805337at2"/>
<dbReference type="UniPathway" id="UPA00043">
    <property type="reaction ID" value="UER00498"/>
</dbReference>
<dbReference type="Proteomes" id="UP000008809">
    <property type="component" value="Chromosome"/>
</dbReference>
<dbReference type="GO" id="GO:0005737">
    <property type="term" value="C:cytoplasm"/>
    <property type="evidence" value="ECO:0007669"/>
    <property type="project" value="TreeGrafter"/>
</dbReference>
<dbReference type="GO" id="GO:0005886">
    <property type="term" value="C:plasma membrane"/>
    <property type="evidence" value="ECO:0007669"/>
    <property type="project" value="TreeGrafter"/>
</dbReference>
<dbReference type="GO" id="GO:0008718">
    <property type="term" value="F:D-amino-acid dehydrogenase activity"/>
    <property type="evidence" value="ECO:0007669"/>
    <property type="project" value="UniProtKB-UniRule"/>
</dbReference>
<dbReference type="GO" id="GO:0055130">
    <property type="term" value="P:D-alanine catabolic process"/>
    <property type="evidence" value="ECO:0007669"/>
    <property type="project" value="UniProtKB-UniPathway"/>
</dbReference>
<dbReference type="FunFam" id="3.50.50.60:FF:000020">
    <property type="entry name" value="D-amino acid dehydrogenase"/>
    <property type="match status" value="1"/>
</dbReference>
<dbReference type="Gene3D" id="3.30.9.10">
    <property type="entry name" value="D-Amino Acid Oxidase, subunit A, domain 2"/>
    <property type="match status" value="1"/>
</dbReference>
<dbReference type="Gene3D" id="3.50.50.60">
    <property type="entry name" value="FAD/NAD(P)-binding domain"/>
    <property type="match status" value="2"/>
</dbReference>
<dbReference type="HAMAP" id="MF_01202">
    <property type="entry name" value="DadA"/>
    <property type="match status" value="1"/>
</dbReference>
<dbReference type="InterPro" id="IPR023080">
    <property type="entry name" value="DadA"/>
</dbReference>
<dbReference type="InterPro" id="IPR006076">
    <property type="entry name" value="FAD-dep_OxRdtase"/>
</dbReference>
<dbReference type="InterPro" id="IPR036188">
    <property type="entry name" value="FAD/NAD-bd_sf"/>
</dbReference>
<dbReference type="NCBIfam" id="NF001933">
    <property type="entry name" value="PRK00711.1"/>
    <property type="match status" value="1"/>
</dbReference>
<dbReference type="PANTHER" id="PTHR13847:SF280">
    <property type="entry name" value="D-AMINO ACID DEHYDROGENASE"/>
    <property type="match status" value="1"/>
</dbReference>
<dbReference type="PANTHER" id="PTHR13847">
    <property type="entry name" value="SARCOSINE DEHYDROGENASE-RELATED"/>
    <property type="match status" value="1"/>
</dbReference>
<dbReference type="Pfam" id="PF01266">
    <property type="entry name" value="DAO"/>
    <property type="match status" value="1"/>
</dbReference>
<dbReference type="SUPFAM" id="SSF54373">
    <property type="entry name" value="FAD-linked reductases, C-terminal domain"/>
    <property type="match status" value="1"/>
</dbReference>
<dbReference type="SUPFAM" id="SSF51905">
    <property type="entry name" value="FAD/NAD(P)-binding domain"/>
    <property type="match status" value="1"/>
</dbReference>
<proteinExistence type="inferred from homology"/>
<accession>Q2IZZ7</accession>
<reference key="1">
    <citation type="submission" date="2006-01" db="EMBL/GenBank/DDBJ databases">
        <title>Complete sequence of Rhodopseudomonas palustris HaA2.</title>
        <authorList>
            <consortium name="US DOE Joint Genome Institute"/>
            <person name="Copeland A."/>
            <person name="Lucas S."/>
            <person name="Lapidus A."/>
            <person name="Barry K."/>
            <person name="Detter J.C."/>
            <person name="Glavina T."/>
            <person name="Hammon N."/>
            <person name="Israni S."/>
            <person name="Pitluck S."/>
            <person name="Chain P."/>
            <person name="Malfatti S."/>
            <person name="Shin M."/>
            <person name="Vergez L."/>
            <person name="Schmutz J."/>
            <person name="Larimer F."/>
            <person name="Land M."/>
            <person name="Hauser L."/>
            <person name="Pelletier D.A."/>
            <person name="Kyrpides N."/>
            <person name="Anderson I."/>
            <person name="Oda Y."/>
            <person name="Harwood C.S."/>
            <person name="Richardson P."/>
        </authorList>
    </citation>
    <scope>NUCLEOTIDE SEQUENCE [LARGE SCALE GENOMIC DNA]</scope>
    <source>
        <strain>HaA2</strain>
    </source>
</reference>
<evidence type="ECO:0000255" key="1">
    <source>
        <dbReference type="HAMAP-Rule" id="MF_01202"/>
    </source>
</evidence>
<organism>
    <name type="scientific">Rhodopseudomonas palustris (strain HaA2)</name>
    <dbReference type="NCBI Taxonomy" id="316058"/>
    <lineage>
        <taxon>Bacteria</taxon>
        <taxon>Pseudomonadati</taxon>
        <taxon>Pseudomonadota</taxon>
        <taxon>Alphaproteobacteria</taxon>
        <taxon>Hyphomicrobiales</taxon>
        <taxon>Nitrobacteraceae</taxon>
        <taxon>Rhodopseudomonas</taxon>
    </lineage>
</organism>
<feature type="chain" id="PRO_1000066110" description="D-amino acid dehydrogenase">
    <location>
        <begin position="1"/>
        <end position="425"/>
    </location>
</feature>
<feature type="binding site" evidence="1">
    <location>
        <begin position="3"/>
        <end position="17"/>
    </location>
    <ligand>
        <name>FAD</name>
        <dbReference type="ChEBI" id="CHEBI:57692"/>
    </ligand>
</feature>
<sequence length="425" mass="45886">MKVLVMGAGVIGVTTAYYLAKAGFEVTVIDRQPGPGLETSFANAGEVSPGYSSPWAGPGVPRKAIQWILDRHGPLVVRPQIDPAMWRWVVQMLRNCTASRYALNKSRMVGIAEYSRDCLRALRADIGITYDERSQGTLQLFRKQSQLDAIGGDVEILRQYNVPFEVLDRAGCIRAEPGLAAVQNSFVGGLRLVDDETGDCHLFTQRLEAAAAALGVNFVYETTIRSIDAQGGAVAGVTTDKGRFVADRYVMALGSFSPLLLRPLGIDIPVYPVKGYSITVPIVDEPASPRSTVMDESYKVAITRLGDRIRVGGTAEIGDYQPRLRPNRRVTLDRSLTDLFPGAGDLSQATFWSGLRPMTPDGPPIIGPTRLANLHLNTGHGTLGWTMACGAARVAVDQLRSVEPEIDARALSLSRYQSGAASLGA</sequence>
<protein>
    <recommendedName>
        <fullName evidence="1">D-amino acid dehydrogenase</fullName>
        <ecNumber evidence="1">1.4.99.-</ecNumber>
    </recommendedName>
</protein>
<gene>
    <name evidence="1" type="primary">dadA</name>
    <name type="ordered locus">RPB_1503</name>
</gene>
<keyword id="KW-0274">FAD</keyword>
<keyword id="KW-0285">Flavoprotein</keyword>
<keyword id="KW-0560">Oxidoreductase</keyword>
<keyword id="KW-1185">Reference proteome</keyword>